<dbReference type="EMBL" id="CP000407">
    <property type="protein sequence ID" value="ABP90234.1"/>
    <property type="molecule type" value="Genomic_DNA"/>
</dbReference>
<dbReference type="SMR" id="A4VVU5"/>
<dbReference type="STRING" id="391295.SSU05_1268"/>
<dbReference type="KEGG" id="ssu:SSU05_1268"/>
<dbReference type="eggNOG" id="COG0292">
    <property type="taxonomic scope" value="Bacteria"/>
</dbReference>
<dbReference type="HOGENOM" id="CLU_123265_0_1_9"/>
<dbReference type="GO" id="GO:1990904">
    <property type="term" value="C:ribonucleoprotein complex"/>
    <property type="evidence" value="ECO:0007669"/>
    <property type="project" value="UniProtKB-KW"/>
</dbReference>
<dbReference type="GO" id="GO:0005840">
    <property type="term" value="C:ribosome"/>
    <property type="evidence" value="ECO:0007669"/>
    <property type="project" value="UniProtKB-KW"/>
</dbReference>
<dbReference type="GO" id="GO:0019843">
    <property type="term" value="F:rRNA binding"/>
    <property type="evidence" value="ECO:0007669"/>
    <property type="project" value="UniProtKB-UniRule"/>
</dbReference>
<dbReference type="GO" id="GO:0003735">
    <property type="term" value="F:structural constituent of ribosome"/>
    <property type="evidence" value="ECO:0007669"/>
    <property type="project" value="InterPro"/>
</dbReference>
<dbReference type="GO" id="GO:0000027">
    <property type="term" value="P:ribosomal large subunit assembly"/>
    <property type="evidence" value="ECO:0007669"/>
    <property type="project" value="UniProtKB-UniRule"/>
</dbReference>
<dbReference type="GO" id="GO:0006412">
    <property type="term" value="P:translation"/>
    <property type="evidence" value="ECO:0007669"/>
    <property type="project" value="InterPro"/>
</dbReference>
<dbReference type="CDD" id="cd07026">
    <property type="entry name" value="Ribosomal_L20"/>
    <property type="match status" value="1"/>
</dbReference>
<dbReference type="FunFam" id="1.10.1900.20:FF:000001">
    <property type="entry name" value="50S ribosomal protein L20"/>
    <property type="match status" value="1"/>
</dbReference>
<dbReference type="Gene3D" id="6.10.160.10">
    <property type="match status" value="1"/>
</dbReference>
<dbReference type="Gene3D" id="1.10.1900.20">
    <property type="entry name" value="Ribosomal protein L20"/>
    <property type="match status" value="1"/>
</dbReference>
<dbReference type="HAMAP" id="MF_00382">
    <property type="entry name" value="Ribosomal_bL20"/>
    <property type="match status" value="1"/>
</dbReference>
<dbReference type="InterPro" id="IPR005813">
    <property type="entry name" value="Ribosomal_bL20"/>
</dbReference>
<dbReference type="InterPro" id="IPR049946">
    <property type="entry name" value="RIBOSOMAL_L20_CS"/>
</dbReference>
<dbReference type="InterPro" id="IPR035566">
    <property type="entry name" value="Ribosomal_protein_bL20_C"/>
</dbReference>
<dbReference type="NCBIfam" id="TIGR01032">
    <property type="entry name" value="rplT_bact"/>
    <property type="match status" value="1"/>
</dbReference>
<dbReference type="PANTHER" id="PTHR10986">
    <property type="entry name" value="39S RIBOSOMAL PROTEIN L20"/>
    <property type="match status" value="1"/>
</dbReference>
<dbReference type="Pfam" id="PF00453">
    <property type="entry name" value="Ribosomal_L20"/>
    <property type="match status" value="1"/>
</dbReference>
<dbReference type="PRINTS" id="PR00062">
    <property type="entry name" value="RIBOSOMALL20"/>
</dbReference>
<dbReference type="SUPFAM" id="SSF74731">
    <property type="entry name" value="Ribosomal protein L20"/>
    <property type="match status" value="1"/>
</dbReference>
<dbReference type="PROSITE" id="PS00937">
    <property type="entry name" value="RIBOSOMAL_L20"/>
    <property type="match status" value="1"/>
</dbReference>
<keyword id="KW-0687">Ribonucleoprotein</keyword>
<keyword id="KW-0689">Ribosomal protein</keyword>
<keyword id="KW-0694">RNA-binding</keyword>
<keyword id="KW-0699">rRNA-binding</keyword>
<proteinExistence type="inferred from homology"/>
<gene>
    <name evidence="1" type="primary">rplT</name>
    <name type="ordered locus">SSU05_1268</name>
</gene>
<reference key="1">
    <citation type="journal article" date="2007" name="PLoS ONE">
        <title>A glimpse of streptococcal toxic shock syndrome from comparative genomics of S. suis 2 Chinese isolates.</title>
        <authorList>
            <person name="Chen C."/>
            <person name="Tang J."/>
            <person name="Dong W."/>
            <person name="Wang C."/>
            <person name="Feng Y."/>
            <person name="Wang J."/>
            <person name="Zheng F."/>
            <person name="Pan X."/>
            <person name="Liu D."/>
            <person name="Li M."/>
            <person name="Song Y."/>
            <person name="Zhu X."/>
            <person name="Sun H."/>
            <person name="Feng T."/>
            <person name="Guo Z."/>
            <person name="Ju A."/>
            <person name="Ge J."/>
            <person name="Dong Y."/>
            <person name="Sun W."/>
            <person name="Jiang Y."/>
            <person name="Wang J."/>
            <person name="Yan J."/>
            <person name="Yang H."/>
            <person name="Wang X."/>
            <person name="Gao G.F."/>
            <person name="Yang R."/>
            <person name="Wang J."/>
            <person name="Yu J."/>
        </authorList>
    </citation>
    <scope>NUCLEOTIDE SEQUENCE [LARGE SCALE GENOMIC DNA]</scope>
    <source>
        <strain>05ZYH33</strain>
    </source>
</reference>
<evidence type="ECO:0000255" key="1">
    <source>
        <dbReference type="HAMAP-Rule" id="MF_00382"/>
    </source>
</evidence>
<evidence type="ECO:0000305" key="2"/>
<name>RL20_STRSY</name>
<sequence>MLEGGVVSRKRRKRILKLAKGYYGAKHLLFRTAKEQVMNSYYYAYRDRRQKKRDFRKLWITRINAAARMNGLSYSQLMHGLKLAEIEVNRKMLADLAVNDAAAFTALADAAKAKLAK</sequence>
<protein>
    <recommendedName>
        <fullName evidence="1">Large ribosomal subunit protein bL20</fullName>
    </recommendedName>
    <alternativeName>
        <fullName evidence="2">50S ribosomal protein L20</fullName>
    </alternativeName>
</protein>
<accession>A4VVU5</accession>
<comment type="function">
    <text evidence="1">Binds directly to 23S ribosomal RNA and is necessary for the in vitro assembly process of the 50S ribosomal subunit. It is not involved in the protein synthesizing functions of that subunit.</text>
</comment>
<comment type="similarity">
    <text evidence="1">Belongs to the bacterial ribosomal protein bL20 family.</text>
</comment>
<organism>
    <name type="scientific">Streptococcus suis (strain 05ZYH33)</name>
    <dbReference type="NCBI Taxonomy" id="391295"/>
    <lineage>
        <taxon>Bacteria</taxon>
        <taxon>Bacillati</taxon>
        <taxon>Bacillota</taxon>
        <taxon>Bacilli</taxon>
        <taxon>Lactobacillales</taxon>
        <taxon>Streptococcaceae</taxon>
        <taxon>Streptococcus</taxon>
    </lineage>
</organism>
<feature type="chain" id="PRO_0000355477" description="Large ribosomal subunit protein bL20">
    <location>
        <begin position="1"/>
        <end position="117"/>
    </location>
</feature>